<reference key="1">
    <citation type="journal article" date="2005" name="Science">
        <title>The transcriptional landscape of the mammalian genome.</title>
        <authorList>
            <person name="Carninci P."/>
            <person name="Kasukawa T."/>
            <person name="Katayama S."/>
            <person name="Gough J."/>
            <person name="Frith M.C."/>
            <person name="Maeda N."/>
            <person name="Oyama R."/>
            <person name="Ravasi T."/>
            <person name="Lenhard B."/>
            <person name="Wells C."/>
            <person name="Kodzius R."/>
            <person name="Shimokawa K."/>
            <person name="Bajic V.B."/>
            <person name="Brenner S.E."/>
            <person name="Batalov S."/>
            <person name="Forrest A.R."/>
            <person name="Zavolan M."/>
            <person name="Davis M.J."/>
            <person name="Wilming L.G."/>
            <person name="Aidinis V."/>
            <person name="Allen J.E."/>
            <person name="Ambesi-Impiombato A."/>
            <person name="Apweiler R."/>
            <person name="Aturaliya R.N."/>
            <person name="Bailey T.L."/>
            <person name="Bansal M."/>
            <person name="Baxter L."/>
            <person name="Beisel K.W."/>
            <person name="Bersano T."/>
            <person name="Bono H."/>
            <person name="Chalk A.M."/>
            <person name="Chiu K.P."/>
            <person name="Choudhary V."/>
            <person name="Christoffels A."/>
            <person name="Clutterbuck D.R."/>
            <person name="Crowe M.L."/>
            <person name="Dalla E."/>
            <person name="Dalrymple B.P."/>
            <person name="de Bono B."/>
            <person name="Della Gatta G."/>
            <person name="di Bernardo D."/>
            <person name="Down T."/>
            <person name="Engstrom P."/>
            <person name="Fagiolini M."/>
            <person name="Faulkner G."/>
            <person name="Fletcher C.F."/>
            <person name="Fukushima T."/>
            <person name="Furuno M."/>
            <person name="Futaki S."/>
            <person name="Gariboldi M."/>
            <person name="Georgii-Hemming P."/>
            <person name="Gingeras T.R."/>
            <person name="Gojobori T."/>
            <person name="Green R.E."/>
            <person name="Gustincich S."/>
            <person name="Harbers M."/>
            <person name="Hayashi Y."/>
            <person name="Hensch T.K."/>
            <person name="Hirokawa N."/>
            <person name="Hill D."/>
            <person name="Huminiecki L."/>
            <person name="Iacono M."/>
            <person name="Ikeo K."/>
            <person name="Iwama A."/>
            <person name="Ishikawa T."/>
            <person name="Jakt M."/>
            <person name="Kanapin A."/>
            <person name="Katoh M."/>
            <person name="Kawasawa Y."/>
            <person name="Kelso J."/>
            <person name="Kitamura H."/>
            <person name="Kitano H."/>
            <person name="Kollias G."/>
            <person name="Krishnan S.P."/>
            <person name="Kruger A."/>
            <person name="Kummerfeld S.K."/>
            <person name="Kurochkin I.V."/>
            <person name="Lareau L.F."/>
            <person name="Lazarevic D."/>
            <person name="Lipovich L."/>
            <person name="Liu J."/>
            <person name="Liuni S."/>
            <person name="McWilliam S."/>
            <person name="Madan Babu M."/>
            <person name="Madera M."/>
            <person name="Marchionni L."/>
            <person name="Matsuda H."/>
            <person name="Matsuzawa S."/>
            <person name="Miki H."/>
            <person name="Mignone F."/>
            <person name="Miyake S."/>
            <person name="Morris K."/>
            <person name="Mottagui-Tabar S."/>
            <person name="Mulder N."/>
            <person name="Nakano N."/>
            <person name="Nakauchi H."/>
            <person name="Ng P."/>
            <person name="Nilsson R."/>
            <person name="Nishiguchi S."/>
            <person name="Nishikawa S."/>
            <person name="Nori F."/>
            <person name="Ohara O."/>
            <person name="Okazaki Y."/>
            <person name="Orlando V."/>
            <person name="Pang K.C."/>
            <person name="Pavan W.J."/>
            <person name="Pavesi G."/>
            <person name="Pesole G."/>
            <person name="Petrovsky N."/>
            <person name="Piazza S."/>
            <person name="Reed J."/>
            <person name="Reid J.F."/>
            <person name="Ring B.Z."/>
            <person name="Ringwald M."/>
            <person name="Rost B."/>
            <person name="Ruan Y."/>
            <person name="Salzberg S.L."/>
            <person name="Sandelin A."/>
            <person name="Schneider C."/>
            <person name="Schoenbach C."/>
            <person name="Sekiguchi K."/>
            <person name="Semple C.A."/>
            <person name="Seno S."/>
            <person name="Sessa L."/>
            <person name="Sheng Y."/>
            <person name="Shibata Y."/>
            <person name="Shimada H."/>
            <person name="Shimada K."/>
            <person name="Silva D."/>
            <person name="Sinclair B."/>
            <person name="Sperling S."/>
            <person name="Stupka E."/>
            <person name="Sugiura K."/>
            <person name="Sultana R."/>
            <person name="Takenaka Y."/>
            <person name="Taki K."/>
            <person name="Tammoja K."/>
            <person name="Tan S.L."/>
            <person name="Tang S."/>
            <person name="Taylor M.S."/>
            <person name="Tegner J."/>
            <person name="Teichmann S.A."/>
            <person name="Ueda H.R."/>
            <person name="van Nimwegen E."/>
            <person name="Verardo R."/>
            <person name="Wei C.L."/>
            <person name="Yagi K."/>
            <person name="Yamanishi H."/>
            <person name="Zabarovsky E."/>
            <person name="Zhu S."/>
            <person name="Zimmer A."/>
            <person name="Hide W."/>
            <person name="Bult C."/>
            <person name="Grimmond S.M."/>
            <person name="Teasdale R.D."/>
            <person name="Liu E.T."/>
            <person name="Brusic V."/>
            <person name="Quackenbush J."/>
            <person name="Wahlestedt C."/>
            <person name="Mattick J.S."/>
            <person name="Hume D.A."/>
            <person name="Kai C."/>
            <person name="Sasaki D."/>
            <person name="Tomaru Y."/>
            <person name="Fukuda S."/>
            <person name="Kanamori-Katayama M."/>
            <person name="Suzuki M."/>
            <person name="Aoki J."/>
            <person name="Arakawa T."/>
            <person name="Iida J."/>
            <person name="Imamura K."/>
            <person name="Itoh M."/>
            <person name="Kato T."/>
            <person name="Kawaji H."/>
            <person name="Kawagashira N."/>
            <person name="Kawashima T."/>
            <person name="Kojima M."/>
            <person name="Kondo S."/>
            <person name="Konno H."/>
            <person name="Nakano K."/>
            <person name="Ninomiya N."/>
            <person name="Nishio T."/>
            <person name="Okada M."/>
            <person name="Plessy C."/>
            <person name="Shibata K."/>
            <person name="Shiraki T."/>
            <person name="Suzuki S."/>
            <person name="Tagami M."/>
            <person name="Waki K."/>
            <person name="Watahiki A."/>
            <person name="Okamura-Oho Y."/>
            <person name="Suzuki H."/>
            <person name="Kawai J."/>
            <person name="Hayashizaki Y."/>
        </authorList>
    </citation>
    <scope>NUCLEOTIDE SEQUENCE [LARGE SCALE MRNA]</scope>
    <source>
        <strain>C57BL/6J</strain>
        <tissue>Head</tissue>
    </source>
</reference>
<reference key="2">
    <citation type="journal article" date="2004" name="Genome Res.">
        <title>The status, quality, and expansion of the NIH full-length cDNA project: the Mammalian Gene Collection (MGC).</title>
        <authorList>
            <consortium name="The MGC Project Team"/>
        </authorList>
    </citation>
    <scope>NUCLEOTIDE SEQUENCE [LARGE SCALE MRNA] OF 45-411</scope>
    <source>
        <strain>Czech II</strain>
        <tissue>Mammary tumor</tissue>
    </source>
</reference>
<reference key="3">
    <citation type="journal article" date="1995" name="Mech. Dev.">
        <title>Activin disrupts epithelial branching morphogenesis in developing glandular organs of the mouse.</title>
        <authorList>
            <person name="Ritvos O."/>
            <person name="Tuuri T."/>
            <person name="Eramaa M."/>
            <person name="Sainio K."/>
            <person name="Hilden K."/>
            <person name="Saxen L."/>
            <person name="Gilbert S."/>
        </authorList>
    </citation>
    <scope>NUCLEOTIDE SEQUENCE [MRNA] OF 157-390</scope>
    <source>
        <strain>CBA X NMRI</strain>
        <tissue>Testis</tissue>
    </source>
</reference>
<reference key="4">
    <citation type="journal article" date="1993" name="Development">
        <title>Activins are expressed in preimplantation mouse embryos and in ES and EC cells and are regulated on their differentiation.</title>
        <authorList>
            <person name="Albano P.M."/>
            <person name="Groome N."/>
            <person name="Smith J.C."/>
        </authorList>
    </citation>
    <scope>NUCLEOTIDE SEQUENCE [MRNA] OF 290-411</scope>
</reference>
<reference key="5">
    <citation type="journal article" date="1994" name="Genes Dev.">
        <title>Activin/inhibin beta B subunit gene disruption leads to defects in eyelid development and female reproduction.</title>
        <authorList>
            <person name="Vassalli A."/>
            <person name="Matzuk M.M."/>
            <person name="Gardner H.A."/>
            <person name="Lee K.F."/>
            <person name="Jaenisch R."/>
        </authorList>
    </citation>
    <scope>FUNCTION</scope>
    <scope>DISRUPTION PHENOTYPE</scope>
</reference>
<reference key="6">
    <citation type="journal article" date="2008" name="Proc. Natl. Acad. Sci. U.S.A.">
        <title>Activin B receptor ALK7 is a negative regulator of pancreatic beta-cell function.</title>
        <authorList>
            <person name="Bertolino P."/>
            <person name="Holmberg R."/>
            <person name="Reissmann E."/>
            <person name="Andersson O."/>
            <person name="Berggren P.O."/>
            <person name="Ibanez C.F."/>
        </authorList>
    </citation>
    <scope>FUNCTION</scope>
    <scope>DISRUPTION PHENOTYPE</scope>
</reference>
<reference key="7">
    <citation type="journal article" date="2010" name="Biochem. Biophys. Res. Commun.">
        <title>Activin B inhibits lipolysis in 3T3-L1 adipocytes.</title>
        <authorList>
            <person name="Magnusson B."/>
            <person name="Svensson P.A."/>
            <person name="Carlsson L.M."/>
            <person name="Sjoeholm K."/>
        </authorList>
    </citation>
    <scope>FUNCTION</scope>
</reference>
<reference key="8">
    <citation type="journal article" date="2017" name="Int. J. Biochem. Cell Biol.">
        <title>Activin B regulates adipose-derived mesenchymal stem cells to promote skin wound healing via activation of the MAPK signaling pathway.</title>
        <authorList>
            <person name="Zhang L."/>
            <person name="Xu P."/>
            <person name="Wang X."/>
            <person name="Zhang M."/>
            <person name="Yan Y."/>
            <person name="Chen Y."/>
            <person name="Zhang L."/>
            <person name="Zhang L."/>
        </authorList>
    </citation>
    <scope>FUNCTION</scope>
</reference>
<reference key="9">
    <citation type="journal article" date="2022" name="Stem Cell Res Ther">
        <title>Activin B-activated Cdc42 signaling plays a key role in regulating adipose-derived mesenchymal stem cells-mediated skin wound healing.</title>
        <authorList>
            <person name="Huang S."/>
            <person name="Wang X."/>
            <person name="Zhang M."/>
            <person name="Huang M."/>
            <person name="Yan Y."/>
            <person name="Chen Y."/>
            <person name="Zhang Y."/>
            <person name="Xu J."/>
            <person name="Bu L."/>
            <person name="Fan R."/>
            <person name="Tang H."/>
            <person name="Zeng C."/>
            <person name="Zhang L."/>
            <person name="Zhang L."/>
        </authorList>
    </citation>
    <scope>FUNCTION</scope>
</reference>
<keyword id="KW-0165">Cleavage on pair of basic residues</keyword>
<keyword id="KW-1015">Disulfide bond</keyword>
<keyword id="KW-0325">Glycoprotein</keyword>
<keyword id="KW-0339">Growth factor</keyword>
<keyword id="KW-0372">Hormone</keyword>
<keyword id="KW-1185">Reference proteome</keyword>
<keyword id="KW-0964">Secreted</keyword>
<keyword id="KW-0732">Signal</keyword>
<proteinExistence type="evidence at transcript level"/>
<protein>
    <recommendedName>
        <fullName>Inhibin beta B chain</fullName>
    </recommendedName>
    <alternativeName>
        <fullName>Activin beta-B chain</fullName>
    </alternativeName>
</protein>
<comment type="function">
    <text evidence="2">Inhibins and activins inhibit and activate, respectively, the secretion of follitropin by the pituitary gland. Inhibins/activins are involved in regulating a number of diverse functions such as hypothalamic and pituitary hormone secretion, gonadal hormone secretion, germ cell development and maturation, erythroid differentiation, insulin secretion, nerve cell survival, embryonic axial development or bone growth, depending on their subunit composition. Inhibins appear to oppose the functions of activins.</text>
</comment>
<comment type="function">
    <text evidence="2 6 7 8 9 10">Activin B is a dimer of alpha and beta-B that plays a role in several essential biological processes including embryonic development, stem cell maintenance and differentiation, haematopoiesis, cell proliferation and wound healing (PubMed:8125256). Signals through type I receptor ACVR1C, abundantly expressed in pancreatic beta cells, and type II receptors like ACVR2A. Upon ligand binding, these receptors phosphorylate intracellular signaling mediators SMAD2 and SMAD3, which form a complex with SMAD4, translocate to the nucleus, and regulate gene expression. Plays a crucial role in the induction of hepcidin by inflammation through activation of ACVR1C and subsequent phosphorylation of SMAD1/5/8 (PubMed:18480258). Regulates adipocyte lipid metabolism by decreasing non-esterified fatty acids and glycerol release and increases intracellular triglyceride content (PubMed:20382119). Stimulates wound healing by promoting cell migration and hair follicle regeneration through the JNK and ERK signaling pathways downstream of RHOA (PubMed:28396222, PubMed:35690801).</text>
</comment>
<comment type="function">
    <text evidence="1 3">Inhibin B is a dimer of alpha and beta-B that plays a crucial role in the regulation of the reproductive system by inhibiting the secretion of follicle-stimulating hormone (FSH) from the anterior pituitary gland. Thereby, maintains reproductive homeostasis in both males and females. Acts as a more potent suppressor of FSH release than inhibin A (By similarity). Functions as competitive receptor antagonist binding activin type II receptors with high affinity in the presence of the TGF-beta type III coreceptor/TGFBR3L (By similarity).</text>
</comment>
<comment type="subunit">
    <text evidence="2">Dimeric, linked by one or more disulfide bonds. Inhibin B is a dimer of alpha and beta-B. Activin B is a homodimer of beta-B. Activin AB is a dimer of beta-A and beta-B. Interacts with FST and FSTL3. Activin B interacts with BMPR2.</text>
</comment>
<comment type="subcellular location">
    <subcellularLocation>
        <location>Secreted</location>
    </subcellularLocation>
</comment>
<comment type="tissue specificity">
    <text>Uterus, testis, ovary, lung, kidney, brain, CJ7 embryonic stem cells, and possibly in liver.</text>
</comment>
<comment type="disruption phenotype">
    <text evidence="6 10">Inhbb deletion mutant mice are viable. However, the deficiency affects prenatal development with a defect in eyelid fusion at birth and female reproduction (PubMed:8125256). At 2 months of age, Inhbb-deletion mice display 2-fold higher insulin serum levels compared with WT controls (PubMed:18480258).</text>
</comment>
<comment type="similarity">
    <text evidence="11">Belongs to the TGF-beta family.</text>
</comment>
<evidence type="ECO:0000250" key="1">
    <source>
        <dbReference type="UniProtKB" id="P05111"/>
    </source>
</evidence>
<evidence type="ECO:0000250" key="2">
    <source>
        <dbReference type="UniProtKB" id="P09529"/>
    </source>
</evidence>
<evidence type="ECO:0000250" key="3">
    <source>
        <dbReference type="UniProtKB" id="P17490"/>
    </source>
</evidence>
<evidence type="ECO:0000255" key="4"/>
<evidence type="ECO:0000256" key="5">
    <source>
        <dbReference type="SAM" id="MobiDB-lite"/>
    </source>
</evidence>
<evidence type="ECO:0000269" key="6">
    <source>
    </source>
</evidence>
<evidence type="ECO:0000269" key="7">
    <source>
    </source>
</evidence>
<evidence type="ECO:0000269" key="8">
    <source>
    </source>
</evidence>
<evidence type="ECO:0000269" key="9">
    <source>
    </source>
</evidence>
<evidence type="ECO:0000269" key="10">
    <source>
    </source>
</evidence>
<evidence type="ECO:0000305" key="11"/>
<accession>Q04999</accession>
<accession>Q3V1N0</accession>
<accession>Q61277</accession>
<accession>Q80VC4</accession>
<dbReference type="EMBL" id="AK132352">
    <property type="protein sequence ID" value="BAE21120.1"/>
    <property type="molecule type" value="mRNA"/>
</dbReference>
<dbReference type="EMBL" id="BC048845">
    <property type="protein sequence ID" value="AAH48845.1"/>
    <property type="molecule type" value="mRNA"/>
</dbReference>
<dbReference type="EMBL" id="X83376">
    <property type="protein sequence ID" value="CAA58290.1"/>
    <property type="molecule type" value="mRNA"/>
</dbReference>
<dbReference type="EMBL" id="X69620">
    <property type="protein sequence ID" value="CAA49326.1"/>
    <property type="molecule type" value="mRNA"/>
</dbReference>
<dbReference type="CCDS" id="CCDS15224.1"/>
<dbReference type="PIR" id="I48235">
    <property type="entry name" value="I48235"/>
</dbReference>
<dbReference type="RefSeq" id="NP_032407.1">
    <property type="nucleotide sequence ID" value="NM_008381.4"/>
</dbReference>
<dbReference type="SMR" id="Q04999"/>
<dbReference type="BioGRID" id="200763">
    <property type="interactions" value="3"/>
</dbReference>
<dbReference type="FunCoup" id="Q04999">
    <property type="interactions" value="514"/>
</dbReference>
<dbReference type="STRING" id="10090.ENSMUSP00000044918"/>
<dbReference type="GlyCosmos" id="Q04999">
    <property type="glycosylation" value="1 site, No reported glycans"/>
</dbReference>
<dbReference type="GlyGen" id="Q04999">
    <property type="glycosylation" value="2 sites, 1 N-linked glycan (1 site)"/>
</dbReference>
<dbReference type="PhosphoSitePlus" id="Q04999"/>
<dbReference type="PaxDb" id="10090-ENSMUSP00000044918"/>
<dbReference type="PeptideAtlas" id="Q04999"/>
<dbReference type="ProteomicsDB" id="269315"/>
<dbReference type="Antibodypedia" id="33396">
    <property type="antibodies" value="446 antibodies from 33 providers"/>
</dbReference>
<dbReference type="DNASU" id="16324"/>
<dbReference type="Ensembl" id="ENSMUST00000038765.6">
    <property type="protein sequence ID" value="ENSMUSP00000044918.6"/>
    <property type="gene ID" value="ENSMUSG00000037035.6"/>
</dbReference>
<dbReference type="GeneID" id="16324"/>
<dbReference type="KEGG" id="mmu:16324"/>
<dbReference type="UCSC" id="uc007cir.1">
    <property type="organism name" value="mouse"/>
</dbReference>
<dbReference type="AGR" id="MGI:96571"/>
<dbReference type="CTD" id="3625"/>
<dbReference type="MGI" id="MGI:96571">
    <property type="gene designation" value="Inhbb"/>
</dbReference>
<dbReference type="VEuPathDB" id="HostDB:ENSMUSG00000037035"/>
<dbReference type="eggNOG" id="KOG3900">
    <property type="taxonomic scope" value="Eukaryota"/>
</dbReference>
<dbReference type="GeneTree" id="ENSGT00940000159862"/>
<dbReference type="HOGENOM" id="CLU_020515_5_1_1"/>
<dbReference type="InParanoid" id="Q04999"/>
<dbReference type="OMA" id="RMDGDFL"/>
<dbReference type="OrthoDB" id="6516235at2759"/>
<dbReference type="PhylomeDB" id="Q04999"/>
<dbReference type="TreeFam" id="TF351791"/>
<dbReference type="Reactome" id="R-MMU-1502540">
    <property type="pathway name" value="Signaling by Activin"/>
</dbReference>
<dbReference type="Reactome" id="R-MMU-209822">
    <property type="pathway name" value="Glycoprotein hormones"/>
</dbReference>
<dbReference type="Reactome" id="R-MMU-2473224">
    <property type="pathway name" value="Antagonism of Activin by Follistatin"/>
</dbReference>
<dbReference type="BioGRID-ORCS" id="16324">
    <property type="hits" value="2 hits in 78 CRISPR screens"/>
</dbReference>
<dbReference type="ChiTaRS" id="Inhbb">
    <property type="organism name" value="mouse"/>
</dbReference>
<dbReference type="PRO" id="PR:Q04999"/>
<dbReference type="Proteomes" id="UP000000589">
    <property type="component" value="Chromosome 1"/>
</dbReference>
<dbReference type="RNAct" id="Q04999">
    <property type="molecule type" value="protein"/>
</dbReference>
<dbReference type="Bgee" id="ENSMUSG00000037035">
    <property type="expression patterns" value="Expressed in uterine cervix and 168 other cell types or tissues"/>
</dbReference>
<dbReference type="GO" id="GO:0071944">
    <property type="term" value="C:cell periphery"/>
    <property type="evidence" value="ECO:0000314"/>
    <property type="project" value="MGI"/>
</dbReference>
<dbReference type="GO" id="GO:0005576">
    <property type="term" value="C:extracellular region"/>
    <property type="evidence" value="ECO:0000304"/>
    <property type="project" value="Reactome"/>
</dbReference>
<dbReference type="GO" id="GO:0005615">
    <property type="term" value="C:extracellular space"/>
    <property type="evidence" value="ECO:0007005"/>
    <property type="project" value="BHF-UCL"/>
</dbReference>
<dbReference type="GO" id="GO:0048471">
    <property type="term" value="C:perinuclear region of cytoplasm"/>
    <property type="evidence" value="ECO:0000314"/>
    <property type="project" value="MGI"/>
</dbReference>
<dbReference type="GO" id="GO:0008083">
    <property type="term" value="F:growth factor activity"/>
    <property type="evidence" value="ECO:0007669"/>
    <property type="project" value="UniProtKB-KW"/>
</dbReference>
<dbReference type="GO" id="GO:0005179">
    <property type="term" value="F:hormone activity"/>
    <property type="evidence" value="ECO:0007669"/>
    <property type="project" value="UniProtKB-KW"/>
</dbReference>
<dbReference type="GO" id="GO:0042803">
    <property type="term" value="F:protein homodimerization activity"/>
    <property type="evidence" value="ECO:0000250"/>
    <property type="project" value="UniProtKB"/>
</dbReference>
<dbReference type="GO" id="GO:0032924">
    <property type="term" value="P:activin receptor signaling pathway"/>
    <property type="evidence" value="ECO:0000250"/>
    <property type="project" value="UniProtKB"/>
</dbReference>
<dbReference type="GO" id="GO:0097190">
    <property type="term" value="P:apoptotic signaling pathway"/>
    <property type="evidence" value="ECO:0000316"/>
    <property type="project" value="MGI"/>
</dbReference>
<dbReference type="GO" id="GO:0071277">
    <property type="term" value="P:cellular response to calcium ion"/>
    <property type="evidence" value="ECO:0007669"/>
    <property type="project" value="Ensembl"/>
</dbReference>
<dbReference type="GO" id="GO:0071320">
    <property type="term" value="P:cellular response to cAMP"/>
    <property type="evidence" value="ECO:0007669"/>
    <property type="project" value="Ensembl"/>
</dbReference>
<dbReference type="GO" id="GO:0071397">
    <property type="term" value="P:cellular response to cholesterol"/>
    <property type="evidence" value="ECO:0007669"/>
    <property type="project" value="Ensembl"/>
</dbReference>
<dbReference type="GO" id="GO:0032869">
    <property type="term" value="P:cellular response to insulin stimulus"/>
    <property type="evidence" value="ECO:0000270"/>
    <property type="project" value="UniProtKB"/>
</dbReference>
<dbReference type="GO" id="GO:0071347">
    <property type="term" value="P:cellular response to interleukin-1"/>
    <property type="evidence" value="ECO:0007669"/>
    <property type="project" value="Ensembl"/>
</dbReference>
<dbReference type="GO" id="GO:0044320">
    <property type="term" value="P:cellular response to leptin stimulus"/>
    <property type="evidence" value="ECO:0000270"/>
    <property type="project" value="UniProtKB"/>
</dbReference>
<dbReference type="GO" id="GO:0009267">
    <property type="term" value="P:cellular response to starvation"/>
    <property type="evidence" value="ECO:0000270"/>
    <property type="project" value="UniProtKB"/>
</dbReference>
<dbReference type="GO" id="GO:1904017">
    <property type="term" value="P:cellular response to Thyroglobulin triiodothyronine"/>
    <property type="evidence" value="ECO:0007669"/>
    <property type="project" value="Ensembl"/>
</dbReference>
<dbReference type="GO" id="GO:0097067">
    <property type="term" value="P:cellular response to thyroid hormone stimulus"/>
    <property type="evidence" value="ECO:0007669"/>
    <property type="project" value="Ensembl"/>
</dbReference>
<dbReference type="GO" id="GO:0001654">
    <property type="term" value="P:eye development"/>
    <property type="evidence" value="ECO:0000304"/>
    <property type="project" value="UniProtKB"/>
</dbReference>
<dbReference type="GO" id="GO:0045444">
    <property type="term" value="P:fat cell differentiation"/>
    <property type="evidence" value="ECO:0000270"/>
    <property type="project" value="UniProtKB"/>
</dbReference>
<dbReference type="GO" id="GO:0008585">
    <property type="term" value="P:female gonad development"/>
    <property type="evidence" value="ECO:0007669"/>
    <property type="project" value="Ensembl"/>
</dbReference>
<dbReference type="GO" id="GO:0046882">
    <property type="term" value="P:negative regulation of follicle-stimulating hormone secretion"/>
    <property type="evidence" value="ECO:0000250"/>
    <property type="project" value="UniProtKB"/>
</dbReference>
<dbReference type="GO" id="GO:0032686">
    <property type="term" value="P:negative regulation of hepatocyte growth factor production"/>
    <property type="evidence" value="ECO:0000250"/>
    <property type="project" value="UniProtKB"/>
</dbReference>
<dbReference type="GO" id="GO:0046676">
    <property type="term" value="P:negative regulation of insulin secretion"/>
    <property type="evidence" value="ECO:0000315"/>
    <property type="project" value="MGI"/>
</dbReference>
<dbReference type="GO" id="GO:0048599">
    <property type="term" value="P:oocyte development"/>
    <property type="evidence" value="ECO:0000316"/>
    <property type="project" value="MGI"/>
</dbReference>
<dbReference type="GO" id="GO:0021983">
    <property type="term" value="P:pituitary gland development"/>
    <property type="evidence" value="ECO:0007669"/>
    <property type="project" value="Ensembl"/>
</dbReference>
<dbReference type="GO" id="GO:2001235">
    <property type="term" value="P:positive regulation of apoptotic signaling pathway"/>
    <property type="evidence" value="ECO:0000316"/>
    <property type="project" value="MGI"/>
</dbReference>
<dbReference type="GO" id="GO:0046881">
    <property type="term" value="P:positive regulation of follicle-stimulating hormone secretion"/>
    <property type="evidence" value="ECO:0000250"/>
    <property type="project" value="UniProtKB"/>
</dbReference>
<dbReference type="GO" id="GO:0060279">
    <property type="term" value="P:positive regulation of ovulation"/>
    <property type="evidence" value="ECO:0000315"/>
    <property type="project" value="UniProtKB"/>
</dbReference>
<dbReference type="GO" id="GO:0034698">
    <property type="term" value="P:response to gonadotropin"/>
    <property type="evidence" value="ECO:0007669"/>
    <property type="project" value="Ensembl"/>
</dbReference>
<dbReference type="GO" id="GO:0017085">
    <property type="term" value="P:response to insecticide"/>
    <property type="evidence" value="ECO:0007669"/>
    <property type="project" value="Ensembl"/>
</dbReference>
<dbReference type="GO" id="GO:0009611">
    <property type="term" value="P:response to wounding"/>
    <property type="evidence" value="ECO:0000250"/>
    <property type="project" value="UniProtKB"/>
</dbReference>
<dbReference type="GO" id="GO:0072520">
    <property type="term" value="P:seminiferous tubule development"/>
    <property type="evidence" value="ECO:0007669"/>
    <property type="project" value="Ensembl"/>
</dbReference>
<dbReference type="GO" id="GO:0007283">
    <property type="term" value="P:spermatogenesis"/>
    <property type="evidence" value="ECO:0007669"/>
    <property type="project" value="Ensembl"/>
</dbReference>
<dbReference type="CDD" id="cd19405">
    <property type="entry name" value="TGF_beta_INHBB"/>
    <property type="match status" value="1"/>
</dbReference>
<dbReference type="FunFam" id="2.10.90.10:FF:000005">
    <property type="entry name" value="Inhibin beta A chain"/>
    <property type="match status" value="1"/>
</dbReference>
<dbReference type="FunFam" id="2.60.120.970:FF:000012">
    <property type="entry name" value="inhibin beta B chain"/>
    <property type="match status" value="1"/>
</dbReference>
<dbReference type="Gene3D" id="2.60.120.970">
    <property type="match status" value="1"/>
</dbReference>
<dbReference type="Gene3D" id="2.10.90.10">
    <property type="entry name" value="Cystine-knot cytokines"/>
    <property type="match status" value="1"/>
</dbReference>
<dbReference type="InterPro" id="IPR029034">
    <property type="entry name" value="Cystine-knot_cytokine"/>
</dbReference>
<dbReference type="InterPro" id="IPR000381">
    <property type="entry name" value="INHBB_C"/>
</dbReference>
<dbReference type="InterPro" id="IPR001839">
    <property type="entry name" value="TGF-b_C"/>
</dbReference>
<dbReference type="InterPro" id="IPR001111">
    <property type="entry name" value="TGF-b_propeptide"/>
</dbReference>
<dbReference type="InterPro" id="IPR015615">
    <property type="entry name" value="TGF-beta-rel"/>
</dbReference>
<dbReference type="InterPro" id="IPR017948">
    <property type="entry name" value="TGFb_CS"/>
</dbReference>
<dbReference type="PANTHER" id="PTHR11848:SF29">
    <property type="entry name" value="INHIBIN BETA B CHAIN"/>
    <property type="match status" value="1"/>
</dbReference>
<dbReference type="PANTHER" id="PTHR11848">
    <property type="entry name" value="TGF-BETA FAMILY"/>
    <property type="match status" value="1"/>
</dbReference>
<dbReference type="Pfam" id="PF00019">
    <property type="entry name" value="TGF_beta"/>
    <property type="match status" value="1"/>
</dbReference>
<dbReference type="Pfam" id="PF00688">
    <property type="entry name" value="TGFb_propeptide"/>
    <property type="match status" value="1"/>
</dbReference>
<dbReference type="PRINTS" id="PR00671">
    <property type="entry name" value="INHIBINBB"/>
</dbReference>
<dbReference type="SMART" id="SM00204">
    <property type="entry name" value="TGFB"/>
    <property type="match status" value="1"/>
</dbReference>
<dbReference type="SUPFAM" id="SSF57501">
    <property type="entry name" value="Cystine-knot cytokines"/>
    <property type="match status" value="1"/>
</dbReference>
<dbReference type="PROSITE" id="PS00250">
    <property type="entry name" value="TGF_BETA_1"/>
    <property type="match status" value="1"/>
</dbReference>
<dbReference type="PROSITE" id="PS51362">
    <property type="entry name" value="TGF_BETA_2"/>
    <property type="match status" value="1"/>
</dbReference>
<name>INHBB_MOUSE</name>
<gene>
    <name type="primary">Inhbb</name>
</gene>
<feature type="signal peptide" evidence="4">
    <location>
        <begin position="1"/>
        <end position="28"/>
    </location>
</feature>
<feature type="propeptide" id="PRO_0000033724" evidence="4">
    <location>
        <begin position="29"/>
        <end position="296"/>
    </location>
</feature>
<feature type="chain" id="PRO_0000033725" description="Inhibin beta B chain">
    <location>
        <begin position="297"/>
        <end position="411"/>
    </location>
</feature>
<feature type="region of interest" description="Disordered" evidence="5">
    <location>
        <begin position="28"/>
        <end position="69"/>
    </location>
</feature>
<feature type="compositionally biased region" description="Pro residues" evidence="5">
    <location>
        <begin position="30"/>
        <end position="47"/>
    </location>
</feature>
<feature type="glycosylation site" description="N-linked (GlcNAc...) asparagine" evidence="4">
    <location>
        <position position="97"/>
    </location>
</feature>
<feature type="disulfide bond" evidence="2">
    <location>
        <begin position="300"/>
        <end position="308"/>
    </location>
</feature>
<feature type="disulfide bond" evidence="2">
    <location>
        <begin position="307"/>
        <end position="376"/>
    </location>
</feature>
<feature type="disulfide bond" evidence="2">
    <location>
        <begin position="336"/>
        <end position="408"/>
    </location>
</feature>
<feature type="disulfide bond" evidence="2">
    <location>
        <begin position="340"/>
        <end position="410"/>
    </location>
</feature>
<feature type="disulfide bond" description="Interchain" evidence="2">
    <location>
        <position position="375"/>
    </location>
</feature>
<feature type="sequence conflict" description="In Ref. 4; CAA49326." evidence="11" ref="4">
    <original>H</original>
    <variation>D</variation>
    <location>
        <position position="291"/>
    </location>
</feature>
<sequence length="411" mass="45211">MDGLPGRALGAACLLLLVAGWLGPEAWGSPTPPPSPAAPPPPPPPGAPGGSQDTCTSCGGGGGGFRRPEELGRVDGDFLEAVKRHILSRLQLRGRPNITHAVPKAAMVTALRKLHAGKVREDGRVEIPHLDGHASPGADGQERVSEIISFAETDGLASSRVRLYFFVSNEGNQNLFVVQASLWLYLKLLPYVLEKGSRRKVRVKVYFQEQGHGDRWNVVEKKVDLKRSGWHTFPITEAIQALFERGERRLNLDVQCDSCQELAVVPVFVDPGEESHRPFVVVQARLGDSRHRIRKRGLECDGRTSLCCRQQFFIDFRLIGWNDWIIAPTGYYGNYCEGSCPAYLAGVPGSASSFHTAVVNQYRMRGLNPGPVNSCCIPTKLSSMSMLYFDDEYNIVKRDVPNMIVEECGCA</sequence>
<organism>
    <name type="scientific">Mus musculus</name>
    <name type="common">Mouse</name>
    <dbReference type="NCBI Taxonomy" id="10090"/>
    <lineage>
        <taxon>Eukaryota</taxon>
        <taxon>Metazoa</taxon>
        <taxon>Chordata</taxon>
        <taxon>Craniata</taxon>
        <taxon>Vertebrata</taxon>
        <taxon>Euteleostomi</taxon>
        <taxon>Mammalia</taxon>
        <taxon>Eutheria</taxon>
        <taxon>Euarchontoglires</taxon>
        <taxon>Glires</taxon>
        <taxon>Rodentia</taxon>
        <taxon>Myomorpha</taxon>
        <taxon>Muroidea</taxon>
        <taxon>Muridae</taxon>
        <taxon>Murinae</taxon>
        <taxon>Mus</taxon>
        <taxon>Mus</taxon>
    </lineage>
</organism>